<sequence length="563" mass="63313">MRKRRTLTAPSHFNSMSAALNPMKMAAMQSQPTVDDSWAASISRIMSLTAGDRHKFSSQPFANRLDAILEAVVPSRKDPTHEKVLTIVNALIENGAIRRDEGAGVYDALLHRVSKYNSINTQSNLERLAGDVREAVAQQVRIAAGNLGSLTALNSFLARLPANVERGQDNYTGFLSALKLLVSEVPNTEVYQSGPHYFLQSSRNGTQTVNLTNAFENLKPLWGVKAPTMERLSISALLTPNTRLLLLLVSPFTDSVSISRDSYLGYLLTLYREALGRNHLDERTLEEVTEVSKAMGNENINNLQATLNFLLTNRQKKIPKDYSLTPEEERIVRFIQQAVSLRMMQENLSPTEALDVTAANMEPSFYANNRDFINKLMDYFHRAAAIAPDYFLGAVMNPRWLPPEGFFTGVFDFPERDNYIWDGLDSSLDLTRQDAMRFLEEKFIDDDQRTESRSVSRVPTPASSRRSSVAMASDSLIRPMNNDKNSLREIEVLADKLARWKTYKRESEEARESLPVIVRPKKYSSAISSDESDDGMSKPDKFLKFEGSGNPFAHLRPKLGRCL</sequence>
<reference key="1">
    <citation type="journal article" date="1997" name="J. Gen. Virol.">
        <title>Complete DNA sequence of canine adenovirus type 1.</title>
        <authorList>
            <person name="Morrison M.D."/>
            <person name="Onions D.E."/>
            <person name="Nicolson L."/>
        </authorList>
    </citation>
    <scope>NUCLEOTIDE SEQUENCE [LARGE SCALE GENOMIC DNA]</scope>
</reference>
<gene>
    <name type="ORF">L1</name>
</gene>
<feature type="chain" id="PRO_0000221838" description="Pre-hexon-linking protein IIIa" evidence="3">
    <location>
        <begin position="1"/>
        <end position="563"/>
    </location>
</feature>
<feature type="chain" id="PRO_0000421392" description="Hexon-linking protein IIIa" evidence="3">
    <location>
        <begin position="1"/>
        <end position="548"/>
    </location>
</feature>
<feature type="propeptide" id="PRO_0000421391" evidence="1 3">
    <location>
        <begin position="549"/>
        <end position="563"/>
    </location>
</feature>
<feature type="region of interest" description="Peripentonal hexon-tethering domain" evidence="3">
    <location>
        <begin position="1"/>
        <end position="117"/>
    </location>
</feature>
<feature type="region of interest" description="Binding to hexon-linking protein" evidence="3">
    <location>
        <begin position="148"/>
        <end position="261"/>
    </location>
</feature>
<feature type="region of interest" description="Disordered" evidence="4">
    <location>
        <begin position="449"/>
        <end position="471"/>
    </location>
</feature>
<feature type="region of interest" description="Disordered" evidence="4">
    <location>
        <begin position="524"/>
        <end position="543"/>
    </location>
</feature>
<feature type="compositionally biased region" description="Low complexity" evidence="4">
    <location>
        <begin position="462"/>
        <end position="471"/>
    </location>
</feature>
<feature type="site" description="Cleavage; by viral protease" evidence="1 3">
    <location>
        <begin position="548"/>
        <end position="549"/>
    </location>
</feature>
<feature type="modified residue" description="Phosphoserine; by host" evidence="3">
    <location>
        <position position="235"/>
    </location>
</feature>
<feature type="modified residue" description="Phosphothreonine; by host" evidence="3">
    <location>
        <position position="284"/>
    </location>
</feature>
<feature type="modified residue" description="Phosphoserine; by host" evidence="3">
    <location>
        <position position="452"/>
    </location>
</feature>
<feature type="modified residue" description="Phosphoserine; by host" evidence="3">
    <location>
        <position position="456"/>
    </location>
</feature>
<feature type="modified residue" description="Phosphoserine; by host" evidence="3">
    <location>
        <position position="475"/>
    </location>
</feature>
<feature type="modified residue" description="Phosphoserine; by host" evidence="3">
    <location>
        <position position="486"/>
    </location>
</feature>
<accession>Q96684</accession>
<name>CAP3_ADECR</name>
<organismHost>
    <name type="scientific">Canis lupus familiaris</name>
    <name type="common">Dog</name>
    <name type="synonym">Canis familiaris</name>
    <dbReference type="NCBI Taxonomy" id="9615"/>
</organismHost>
<evidence type="ECO:0000250" key="1">
    <source>
        <dbReference type="UniProtKB" id="P03279"/>
    </source>
</evidence>
<evidence type="ECO:0000250" key="2">
    <source>
        <dbReference type="UniProtKB" id="P12537"/>
    </source>
</evidence>
<evidence type="ECO:0000255" key="3">
    <source>
        <dbReference type="HAMAP-Rule" id="MF_04047"/>
    </source>
</evidence>
<evidence type="ECO:0000256" key="4">
    <source>
        <dbReference type="SAM" id="MobiDB-lite"/>
    </source>
</evidence>
<evidence type="ECO:0000305" key="5"/>
<keyword id="KW-1232">Capsid decoration protein</keyword>
<keyword id="KW-0167">Capsid protein</keyword>
<keyword id="KW-1048">Host nucleus</keyword>
<keyword id="KW-0426">Late protein</keyword>
<keyword id="KW-0597">Phosphoprotein</keyword>
<keyword id="KW-0231">Viral genome packaging</keyword>
<keyword id="KW-1188">Viral release from host cell</keyword>
<keyword id="KW-0946">Virion</keyword>
<proteinExistence type="inferred from homology"/>
<protein>
    <recommendedName>
        <fullName evidence="3">Pre-hexon-linking protein IIIa</fullName>
    </recommendedName>
    <alternativeName>
        <fullName evidence="3">Capsid vertex-specific component IIIa</fullName>
        <shortName evidence="3">CVSC</shortName>
    </alternativeName>
    <alternativeName>
        <fullName evidence="3">Protein IIIa</fullName>
    </alternativeName>
    <alternativeName>
        <fullName evidence="3">pIIIa</fullName>
    </alternativeName>
    <component>
        <recommendedName>
            <fullName evidence="3">Hexon-linking protein IIIa</fullName>
        </recommendedName>
    </component>
</protein>
<comment type="function">
    <text evidence="3">Structural component of the virion that acts as a cement protein on the capsid exterior which mediates the interactions between the hexons, including the peripentonal hexons, and reaches all the way to the penton vertices. Two hexon linking proteins IIIa, one from each facet, stabilize the unique edge interface between a pair of facets. As the virus enters the host cell, hexon linking proteins IIIa are shed concomitant with virion acidification in the endosome. During virus assembly, seems to play a role in the serotype specificity of the packaging of viral DNA via its interaction with packaging protein 3.</text>
</comment>
<comment type="subunit">
    <text evidence="2 3">Interacts with hexon proteins; this interaction tethers the peripentonal hexons to hexons situated in the facet. Interacts with the penton protein (via N-terminus). Interacts with packaging protein 3; this interaction is required to promote correct genome packaging.</text>
</comment>
<comment type="subcellular location">
    <subcellularLocation>
        <location evidence="3">Virion</location>
    </subcellularLocation>
    <subcellularLocation>
        <location evidence="3">Host nucleus</location>
    </subcellularLocation>
    <text evidence="3">Surrounds the border of each facet on the capsid exterior. Present in around 60 copies per virion.</text>
</comment>
<comment type="induction">
    <text evidence="3">Expressed in the late phase of the viral replicative cycle.</text>
</comment>
<comment type="PTM">
    <text evidence="1 3">Cleaved near the C-terminus by the viral protease during virion maturation to form the mature protein.</text>
</comment>
<comment type="miscellaneous">
    <text evidence="3">All late proteins expressed from the major late promoter are produced by alternative splicing and alternative polyadenylation of the same gene giving rise to non-overlapping ORFs. A leader sequence is present in the N-terminus of all these mRNAs and is recognized by the viral shutoff protein to provide expression although conventional translation via ribosome scanning from the cap has been shut off in the host cell.</text>
</comment>
<comment type="similarity">
    <text evidence="3 5">Belongs to the adenoviridae hexon-linking protein IIIa family.</text>
</comment>
<organism>
    <name type="scientific">Canine adenovirus serotype 1 (strain RI261)</name>
    <name type="common">CAdV-1</name>
    <name type="synonym">Canine adenovirus 1 (strain RI261)</name>
    <dbReference type="NCBI Taxonomy" id="69151"/>
    <lineage>
        <taxon>Viruses</taxon>
        <taxon>Varidnaviria</taxon>
        <taxon>Bamfordvirae</taxon>
        <taxon>Preplasmiviricota</taxon>
        <taxon>Tectiliviricetes</taxon>
        <taxon>Rowavirales</taxon>
        <taxon>Adenoviridae</taxon>
        <taxon>Mastadenovirus</taxon>
        <taxon>Canine mastadenovirus A</taxon>
    </lineage>
</organism>
<dbReference type="EMBL" id="Y07760">
    <property type="protein sequence ID" value="CAA69060.1"/>
    <property type="molecule type" value="Genomic_DNA"/>
</dbReference>
<dbReference type="SMR" id="Q96684"/>
<dbReference type="KEGG" id="vg:1488925"/>
<dbReference type="Proteomes" id="UP000126130">
    <property type="component" value="Segment"/>
</dbReference>
<dbReference type="GO" id="GO:0042025">
    <property type="term" value="C:host cell nucleus"/>
    <property type="evidence" value="ECO:0007669"/>
    <property type="project" value="UniProtKB-SubCell"/>
</dbReference>
<dbReference type="GO" id="GO:0098021">
    <property type="term" value="C:viral capsid, decoration"/>
    <property type="evidence" value="ECO:0007669"/>
    <property type="project" value="UniProtKB-UniRule"/>
</dbReference>
<dbReference type="Gene3D" id="1.20.120.1500">
    <property type="entry name" value="Pre-hexon-linking protein IIIa"/>
    <property type="match status" value="1"/>
</dbReference>
<dbReference type="HAMAP" id="MF_04047">
    <property type="entry name" value="ADV_CAP3"/>
    <property type="match status" value="1"/>
</dbReference>
<dbReference type="InterPro" id="IPR003479">
    <property type="entry name" value="Hex_IIIa"/>
</dbReference>
<dbReference type="InterPro" id="IPR043053">
    <property type="entry name" value="Hex_IIIa_N"/>
</dbReference>
<dbReference type="Pfam" id="PF02455">
    <property type="entry name" value="Hex_IIIa"/>
    <property type="match status" value="1"/>
</dbReference>